<evidence type="ECO:0000255" key="1">
    <source>
        <dbReference type="HAMAP-Rule" id="MF_00822"/>
    </source>
</evidence>
<gene>
    <name evidence="1" type="primary">ureE</name>
</gene>
<feature type="chain" id="PRO_0000223417" description="Urease accessory protein UreE">
    <location>
        <begin position="1"/>
        <end position="176"/>
    </location>
</feature>
<comment type="function">
    <text evidence="1">Involved in urease metallocenter assembly. Binds nickel. Probably functions as a nickel donor during metallocenter assembly.</text>
</comment>
<comment type="subcellular location">
    <subcellularLocation>
        <location evidence="1">Cytoplasm</location>
    </subcellularLocation>
</comment>
<comment type="similarity">
    <text evidence="1">Belongs to the UreE family.</text>
</comment>
<proteinExistence type="inferred from homology"/>
<reference key="1">
    <citation type="journal article" date="2002" name="DNA Seq.">
        <title>Cloning and characterization of a Helicobacter bizzozeronii urease gene cluster.</title>
        <authorList>
            <person name="Zhu J."/>
            <person name="Teng C.H."/>
            <person name="Chang C.F."/>
            <person name="Chang C.D."/>
            <person name="Simpson K.W."/>
            <person name="Wei C."/>
            <person name="McDonough P."/>
            <person name="McDonough S."/>
            <person name="Chang Y.F."/>
        </authorList>
    </citation>
    <scope>NUCLEOTIDE SEQUENCE [GENOMIC DNA]</scope>
</reference>
<sequence length="176" mass="19511">MLAESVLGNLKEGGSSKELDFIDLEWFDAQKRMGRFTSQKGAELVLKLKNPPKMGLCDGDILFEDATSLIAINIIPTPTLHVYADSTAQVARLCYEVGNRHASLYYGDSPLSFKTPFERPLQVLFDKLALRYEVLKSKLDASQRISVSAPHADPLQEGSAPLKFKSALDLQIVIKK</sequence>
<protein>
    <recommendedName>
        <fullName evidence="1">Urease accessory protein UreE</fullName>
    </recommendedName>
</protein>
<organism>
    <name type="scientific">Helicobacter bizzozeronii</name>
    <dbReference type="NCBI Taxonomy" id="56877"/>
    <lineage>
        <taxon>Bacteria</taxon>
        <taxon>Pseudomonadati</taxon>
        <taxon>Campylobacterota</taxon>
        <taxon>Epsilonproteobacteria</taxon>
        <taxon>Campylobacterales</taxon>
        <taxon>Helicobacteraceae</taxon>
        <taxon>Helicobacter</taxon>
    </lineage>
</organism>
<accession>Q8GH95</accession>
<name>UREE_HELBI</name>
<keyword id="KW-0143">Chaperone</keyword>
<keyword id="KW-0963">Cytoplasm</keyword>
<keyword id="KW-0533">Nickel</keyword>
<keyword id="KW-0996">Nickel insertion</keyword>
<dbReference type="EMBL" id="AF330621">
    <property type="protein sequence ID" value="AAO15376.1"/>
    <property type="molecule type" value="Genomic_DNA"/>
</dbReference>
<dbReference type="RefSeq" id="WP_104685271.1">
    <property type="nucleotide sequence ID" value="NZ_FZKO01000054.1"/>
</dbReference>
<dbReference type="SMR" id="Q8GH95"/>
<dbReference type="GO" id="GO:0005737">
    <property type="term" value="C:cytoplasm"/>
    <property type="evidence" value="ECO:0007669"/>
    <property type="project" value="UniProtKB-SubCell"/>
</dbReference>
<dbReference type="GO" id="GO:0016151">
    <property type="term" value="F:nickel cation binding"/>
    <property type="evidence" value="ECO:0007669"/>
    <property type="project" value="UniProtKB-UniRule"/>
</dbReference>
<dbReference type="GO" id="GO:0051082">
    <property type="term" value="F:unfolded protein binding"/>
    <property type="evidence" value="ECO:0007669"/>
    <property type="project" value="UniProtKB-UniRule"/>
</dbReference>
<dbReference type="GO" id="GO:0006457">
    <property type="term" value="P:protein folding"/>
    <property type="evidence" value="ECO:0007669"/>
    <property type="project" value="InterPro"/>
</dbReference>
<dbReference type="GO" id="GO:0065003">
    <property type="term" value="P:protein-containing complex assembly"/>
    <property type="evidence" value="ECO:0007669"/>
    <property type="project" value="InterPro"/>
</dbReference>
<dbReference type="GO" id="GO:0019627">
    <property type="term" value="P:urea metabolic process"/>
    <property type="evidence" value="ECO:0007669"/>
    <property type="project" value="InterPro"/>
</dbReference>
<dbReference type="CDD" id="cd00571">
    <property type="entry name" value="UreE"/>
    <property type="match status" value="1"/>
</dbReference>
<dbReference type="Gene3D" id="2.60.260.20">
    <property type="entry name" value="Urease metallochaperone UreE, N-terminal domain"/>
    <property type="match status" value="1"/>
</dbReference>
<dbReference type="Gene3D" id="3.30.70.790">
    <property type="entry name" value="UreE, C-terminal domain"/>
    <property type="match status" value="1"/>
</dbReference>
<dbReference type="HAMAP" id="MF_00822">
    <property type="entry name" value="UreE"/>
    <property type="match status" value="1"/>
</dbReference>
<dbReference type="InterPro" id="IPR012406">
    <property type="entry name" value="UreE"/>
</dbReference>
<dbReference type="InterPro" id="IPR007864">
    <property type="entry name" value="UreE_C_dom"/>
</dbReference>
<dbReference type="InterPro" id="IPR004029">
    <property type="entry name" value="UreE_N"/>
</dbReference>
<dbReference type="InterPro" id="IPR036118">
    <property type="entry name" value="UreE_N_sf"/>
</dbReference>
<dbReference type="Pfam" id="PF05194">
    <property type="entry name" value="UreE_C"/>
    <property type="match status" value="1"/>
</dbReference>
<dbReference type="Pfam" id="PF02814">
    <property type="entry name" value="UreE_N"/>
    <property type="match status" value="1"/>
</dbReference>
<dbReference type="PIRSF" id="PIRSF036402">
    <property type="entry name" value="Ureas_acces_UreE"/>
    <property type="match status" value="1"/>
</dbReference>
<dbReference type="SMART" id="SM00988">
    <property type="entry name" value="UreE_N"/>
    <property type="match status" value="1"/>
</dbReference>
<dbReference type="SUPFAM" id="SSF69737">
    <property type="entry name" value="Urease metallochaperone UreE, C-terminal domain"/>
    <property type="match status" value="1"/>
</dbReference>
<dbReference type="SUPFAM" id="SSF69287">
    <property type="entry name" value="Urease metallochaperone UreE, N-terminal domain"/>
    <property type="match status" value="1"/>
</dbReference>